<comment type="function">
    <text evidence="1">Bifunctional serine/threonine kinase and phosphorylase involved in the regulation of the pyruvate, phosphate dikinase (PPDK) by catalyzing its phosphorylation/dephosphorylation.</text>
</comment>
<comment type="catalytic activity">
    <reaction evidence="1">
        <text>N(tele)-phospho-L-histidyl/L-threonyl-[pyruvate, phosphate dikinase] + ADP = N(tele)-phospho-L-histidyl/O-phospho-L-threonyl-[pyruvate, phosphate dikinase] + AMP + H(+)</text>
        <dbReference type="Rhea" id="RHEA:43692"/>
        <dbReference type="Rhea" id="RHEA-COMP:10650"/>
        <dbReference type="Rhea" id="RHEA-COMP:10651"/>
        <dbReference type="ChEBI" id="CHEBI:15378"/>
        <dbReference type="ChEBI" id="CHEBI:30013"/>
        <dbReference type="ChEBI" id="CHEBI:61977"/>
        <dbReference type="ChEBI" id="CHEBI:83586"/>
        <dbReference type="ChEBI" id="CHEBI:456215"/>
        <dbReference type="ChEBI" id="CHEBI:456216"/>
        <dbReference type="EC" id="2.7.11.32"/>
    </reaction>
</comment>
<comment type="catalytic activity">
    <reaction evidence="1">
        <text>N(tele)-phospho-L-histidyl/O-phospho-L-threonyl-[pyruvate, phosphate dikinase] + phosphate + H(+) = N(tele)-phospho-L-histidyl/L-threonyl-[pyruvate, phosphate dikinase] + diphosphate</text>
        <dbReference type="Rhea" id="RHEA:43696"/>
        <dbReference type="Rhea" id="RHEA-COMP:10650"/>
        <dbReference type="Rhea" id="RHEA-COMP:10651"/>
        <dbReference type="ChEBI" id="CHEBI:15378"/>
        <dbReference type="ChEBI" id="CHEBI:30013"/>
        <dbReference type="ChEBI" id="CHEBI:33019"/>
        <dbReference type="ChEBI" id="CHEBI:43474"/>
        <dbReference type="ChEBI" id="CHEBI:61977"/>
        <dbReference type="ChEBI" id="CHEBI:83586"/>
        <dbReference type="EC" id="2.7.4.27"/>
    </reaction>
</comment>
<comment type="similarity">
    <text evidence="1">Belongs to the pyruvate, phosphate/water dikinase regulatory protein family. PDRP subfamily.</text>
</comment>
<organism>
    <name type="scientific">Rhizobium meliloti (strain 1021)</name>
    <name type="common">Ensifer meliloti</name>
    <name type="synonym">Sinorhizobium meliloti</name>
    <dbReference type="NCBI Taxonomy" id="266834"/>
    <lineage>
        <taxon>Bacteria</taxon>
        <taxon>Pseudomonadati</taxon>
        <taxon>Pseudomonadota</taxon>
        <taxon>Alphaproteobacteria</taxon>
        <taxon>Hyphomicrobiales</taxon>
        <taxon>Rhizobiaceae</taxon>
        <taxon>Sinorhizobium/Ensifer group</taxon>
        <taxon>Sinorhizobium</taxon>
    </lineage>
</organism>
<reference key="1">
    <citation type="journal article" date="2001" name="Proc. Natl. Acad. Sci. U.S.A.">
        <title>Analysis of the chromosome sequence of the legume symbiont Sinorhizobium meliloti strain 1021.</title>
        <authorList>
            <person name="Capela D."/>
            <person name="Barloy-Hubler F."/>
            <person name="Gouzy J."/>
            <person name="Bothe G."/>
            <person name="Ampe F."/>
            <person name="Batut J."/>
            <person name="Boistard P."/>
            <person name="Becker A."/>
            <person name="Boutry M."/>
            <person name="Cadieu E."/>
            <person name="Dreano S."/>
            <person name="Gloux S."/>
            <person name="Godrie T."/>
            <person name="Goffeau A."/>
            <person name="Kahn D."/>
            <person name="Kiss E."/>
            <person name="Lelaure V."/>
            <person name="Masuy D."/>
            <person name="Pohl T."/>
            <person name="Portetelle D."/>
            <person name="Puehler A."/>
            <person name="Purnelle B."/>
            <person name="Ramsperger U."/>
            <person name="Renard C."/>
            <person name="Thebault P."/>
            <person name="Vandenbol M."/>
            <person name="Weidner S."/>
            <person name="Galibert F."/>
        </authorList>
    </citation>
    <scope>NUCLEOTIDE SEQUENCE [LARGE SCALE GENOMIC DNA]</scope>
    <source>
        <strain>1021</strain>
    </source>
</reference>
<reference key="2">
    <citation type="journal article" date="2001" name="Science">
        <title>The composite genome of the legume symbiont Sinorhizobium meliloti.</title>
        <authorList>
            <person name="Galibert F."/>
            <person name="Finan T.M."/>
            <person name="Long S.R."/>
            <person name="Puehler A."/>
            <person name="Abola P."/>
            <person name="Ampe F."/>
            <person name="Barloy-Hubler F."/>
            <person name="Barnett M.J."/>
            <person name="Becker A."/>
            <person name="Boistard P."/>
            <person name="Bothe G."/>
            <person name="Boutry M."/>
            <person name="Bowser L."/>
            <person name="Buhrmester J."/>
            <person name="Cadieu E."/>
            <person name="Capela D."/>
            <person name="Chain P."/>
            <person name="Cowie A."/>
            <person name="Davis R.W."/>
            <person name="Dreano S."/>
            <person name="Federspiel N.A."/>
            <person name="Fisher R.F."/>
            <person name="Gloux S."/>
            <person name="Godrie T."/>
            <person name="Goffeau A."/>
            <person name="Golding B."/>
            <person name="Gouzy J."/>
            <person name="Gurjal M."/>
            <person name="Hernandez-Lucas I."/>
            <person name="Hong A."/>
            <person name="Huizar L."/>
            <person name="Hyman R.W."/>
            <person name="Jones T."/>
            <person name="Kahn D."/>
            <person name="Kahn M.L."/>
            <person name="Kalman S."/>
            <person name="Keating D.H."/>
            <person name="Kiss E."/>
            <person name="Komp C."/>
            <person name="Lelaure V."/>
            <person name="Masuy D."/>
            <person name="Palm C."/>
            <person name="Peck M.C."/>
            <person name="Pohl T.M."/>
            <person name="Portetelle D."/>
            <person name="Purnelle B."/>
            <person name="Ramsperger U."/>
            <person name="Surzycki R."/>
            <person name="Thebault P."/>
            <person name="Vandenbol M."/>
            <person name="Vorhoelter F.J."/>
            <person name="Weidner S."/>
            <person name="Wells D.H."/>
            <person name="Wong K."/>
            <person name="Yeh K.-C."/>
            <person name="Batut J."/>
        </authorList>
    </citation>
    <scope>NUCLEOTIDE SEQUENCE [LARGE SCALE GENOMIC DNA]</scope>
    <source>
        <strain>1021</strain>
    </source>
</reference>
<feature type="chain" id="PRO_0000196699" description="Putative pyruvate, phosphate dikinase regulatory protein">
    <location>
        <begin position="1"/>
        <end position="273"/>
    </location>
</feature>
<feature type="binding site" evidence="1">
    <location>
        <begin position="153"/>
        <end position="160"/>
    </location>
    <ligand>
        <name>ADP</name>
        <dbReference type="ChEBI" id="CHEBI:456216"/>
    </ligand>
</feature>
<name>PDRP_RHIME</name>
<gene>
    <name type="ordered locus">R00001</name>
    <name type="ORF">SMc02793</name>
</gene>
<proteinExistence type="inferred from homology"/>
<evidence type="ECO:0000255" key="1">
    <source>
        <dbReference type="HAMAP-Rule" id="MF_00921"/>
    </source>
</evidence>
<keyword id="KW-0418">Kinase</keyword>
<keyword id="KW-0547">Nucleotide-binding</keyword>
<keyword id="KW-1185">Reference proteome</keyword>
<keyword id="KW-0723">Serine/threonine-protein kinase</keyword>
<keyword id="KW-0808">Transferase</keyword>
<sequence length="273" mass="30194">MENRKNYFHLHLISDSTGETLIAAGRAAAAQFQSSHALEHVYPLIRNRKQLMQVMDAVDGAPGIVLYTIVDRELAGLIDQRCREIGVPCVSVLDPIIELFQSYLGSPSRRRSGAQHVMDAEYFARIEALNFTMDHDDGQVPSDFNEADVVLVGVSRTSKTPTSIYLANRGIKTANIPIVPGVPLPDALLKATKPLIVGLIASAERLSQVRQHRVLGTTQSFHGEDYTDRAAIAEELKYARSLCARNNWPLIDVTRRSIEETAAAIVALRPRLR</sequence>
<accession>Q92TF2</accession>
<protein>
    <recommendedName>
        <fullName evidence="1">Putative pyruvate, phosphate dikinase regulatory protein</fullName>
        <shortName evidence="1">PPDK regulatory protein</shortName>
        <ecNumber evidence="1">2.7.11.32</ecNumber>
        <ecNumber evidence="1">2.7.4.27</ecNumber>
    </recommendedName>
</protein>
<dbReference type="EC" id="2.7.11.32" evidence="1"/>
<dbReference type="EC" id="2.7.4.27" evidence="1"/>
<dbReference type="EMBL" id="AL591688">
    <property type="protein sequence ID" value="CAC41388.1"/>
    <property type="molecule type" value="Genomic_DNA"/>
</dbReference>
<dbReference type="RefSeq" id="NP_384107.1">
    <property type="nucleotide sequence ID" value="NC_003047.1"/>
</dbReference>
<dbReference type="RefSeq" id="WP_010968285.1">
    <property type="nucleotide sequence ID" value="NC_003047.1"/>
</dbReference>
<dbReference type="SMR" id="Q92TF2"/>
<dbReference type="EnsemblBacteria" id="CAC41388">
    <property type="protein sequence ID" value="CAC41388"/>
    <property type="gene ID" value="SMc02793"/>
</dbReference>
<dbReference type="KEGG" id="sme:SMc02793"/>
<dbReference type="PATRIC" id="fig|266834.11.peg.1353"/>
<dbReference type="eggNOG" id="COG1806">
    <property type="taxonomic scope" value="Bacteria"/>
</dbReference>
<dbReference type="HOGENOM" id="CLU_046206_2_0_5"/>
<dbReference type="OrthoDB" id="9782201at2"/>
<dbReference type="Proteomes" id="UP000001976">
    <property type="component" value="Chromosome"/>
</dbReference>
<dbReference type="GO" id="GO:0043531">
    <property type="term" value="F:ADP binding"/>
    <property type="evidence" value="ECO:0007669"/>
    <property type="project" value="UniProtKB-UniRule"/>
</dbReference>
<dbReference type="GO" id="GO:0005524">
    <property type="term" value="F:ATP binding"/>
    <property type="evidence" value="ECO:0007669"/>
    <property type="project" value="InterPro"/>
</dbReference>
<dbReference type="GO" id="GO:0016776">
    <property type="term" value="F:phosphotransferase activity, phosphate group as acceptor"/>
    <property type="evidence" value="ECO:0007669"/>
    <property type="project" value="UniProtKB-UniRule"/>
</dbReference>
<dbReference type="GO" id="GO:0004674">
    <property type="term" value="F:protein serine/threonine kinase activity"/>
    <property type="evidence" value="ECO:0007669"/>
    <property type="project" value="UniProtKB-UniRule"/>
</dbReference>
<dbReference type="HAMAP" id="MF_00921">
    <property type="entry name" value="PDRP"/>
    <property type="match status" value="1"/>
</dbReference>
<dbReference type="InterPro" id="IPR005177">
    <property type="entry name" value="Kinase-pyrophosphorylase"/>
</dbReference>
<dbReference type="InterPro" id="IPR026565">
    <property type="entry name" value="PPDK_reg"/>
</dbReference>
<dbReference type="NCBIfam" id="NF003742">
    <property type="entry name" value="PRK05339.1"/>
    <property type="match status" value="1"/>
</dbReference>
<dbReference type="PANTHER" id="PTHR31756">
    <property type="entry name" value="PYRUVATE, PHOSPHATE DIKINASE REGULATORY PROTEIN 1, CHLOROPLASTIC"/>
    <property type="match status" value="1"/>
</dbReference>
<dbReference type="PANTHER" id="PTHR31756:SF3">
    <property type="entry name" value="PYRUVATE, PHOSPHATE DIKINASE REGULATORY PROTEIN 1, CHLOROPLASTIC"/>
    <property type="match status" value="1"/>
</dbReference>
<dbReference type="Pfam" id="PF03618">
    <property type="entry name" value="Kinase-PPPase"/>
    <property type="match status" value="1"/>
</dbReference>